<protein>
    <recommendedName>
        <fullName evidence="1">Putative pre-16S rRNA nuclease</fullName>
        <ecNumber evidence="1">3.1.-.-</ecNumber>
    </recommendedName>
</protein>
<comment type="function">
    <text evidence="1">Could be a nuclease involved in processing of the 5'-end of pre-16S rRNA.</text>
</comment>
<comment type="subcellular location">
    <subcellularLocation>
        <location evidence="1">Cytoplasm</location>
    </subcellularLocation>
</comment>
<comment type="similarity">
    <text evidence="1">Belongs to the YqgF nuclease family.</text>
</comment>
<proteinExistence type="inferred from homology"/>
<reference key="1">
    <citation type="submission" date="2008-02" db="EMBL/GenBank/DDBJ databases">
        <title>Complete sequence of Haemophilus somnus 2336.</title>
        <authorList>
            <consortium name="US DOE Joint Genome Institute"/>
            <person name="Siddaramappa S."/>
            <person name="Duncan A.J."/>
            <person name="Challacombe J.F."/>
            <person name="Rainey D."/>
            <person name="Gillaspy A.F."/>
            <person name="Carson M."/>
            <person name="Gipson J."/>
            <person name="Gipson M."/>
            <person name="Bruce D."/>
            <person name="Detter J.C."/>
            <person name="Han C.S."/>
            <person name="Land M."/>
            <person name="Tapia R."/>
            <person name="Thompson L.S."/>
            <person name="Orvis J."/>
            <person name="Zaitshik J."/>
            <person name="Barnes G."/>
            <person name="Brettin T.S."/>
            <person name="Dyer D.W."/>
            <person name="Inzana T.J."/>
        </authorList>
    </citation>
    <scope>NUCLEOTIDE SEQUENCE [LARGE SCALE GENOMIC DNA]</scope>
    <source>
        <strain>2336</strain>
    </source>
</reference>
<dbReference type="EC" id="3.1.-.-" evidence="1"/>
<dbReference type="EMBL" id="CP000947">
    <property type="protein sequence ID" value="ACA31690.1"/>
    <property type="molecule type" value="Genomic_DNA"/>
</dbReference>
<dbReference type="RefSeq" id="WP_011608168.1">
    <property type="nucleotide sequence ID" value="NC_010519.1"/>
</dbReference>
<dbReference type="SMR" id="B0UWW2"/>
<dbReference type="STRING" id="228400.HSM_1901"/>
<dbReference type="GeneID" id="31488212"/>
<dbReference type="KEGG" id="hsm:HSM_1901"/>
<dbReference type="HOGENOM" id="CLU_098240_3_0_6"/>
<dbReference type="GO" id="GO:0005829">
    <property type="term" value="C:cytosol"/>
    <property type="evidence" value="ECO:0007669"/>
    <property type="project" value="TreeGrafter"/>
</dbReference>
<dbReference type="GO" id="GO:0004518">
    <property type="term" value="F:nuclease activity"/>
    <property type="evidence" value="ECO:0007669"/>
    <property type="project" value="UniProtKB-KW"/>
</dbReference>
<dbReference type="GO" id="GO:0000967">
    <property type="term" value="P:rRNA 5'-end processing"/>
    <property type="evidence" value="ECO:0007669"/>
    <property type="project" value="UniProtKB-UniRule"/>
</dbReference>
<dbReference type="CDD" id="cd16964">
    <property type="entry name" value="YqgF"/>
    <property type="match status" value="1"/>
</dbReference>
<dbReference type="FunFam" id="3.30.420.140:FF:000002">
    <property type="entry name" value="Putative pre-16S rRNA nuclease"/>
    <property type="match status" value="1"/>
</dbReference>
<dbReference type="Gene3D" id="3.30.420.140">
    <property type="entry name" value="YqgF/RNase H-like domain"/>
    <property type="match status" value="1"/>
</dbReference>
<dbReference type="HAMAP" id="MF_00651">
    <property type="entry name" value="Nuclease_YqgF"/>
    <property type="match status" value="1"/>
</dbReference>
<dbReference type="InterPro" id="IPR012337">
    <property type="entry name" value="RNaseH-like_sf"/>
</dbReference>
<dbReference type="InterPro" id="IPR005227">
    <property type="entry name" value="YqgF"/>
</dbReference>
<dbReference type="InterPro" id="IPR006641">
    <property type="entry name" value="YqgF/RNaseH-like_dom"/>
</dbReference>
<dbReference type="InterPro" id="IPR037027">
    <property type="entry name" value="YqgF/RNaseH-like_dom_sf"/>
</dbReference>
<dbReference type="NCBIfam" id="TIGR00250">
    <property type="entry name" value="RNAse_H_YqgF"/>
    <property type="match status" value="1"/>
</dbReference>
<dbReference type="PANTHER" id="PTHR33317">
    <property type="entry name" value="POLYNUCLEOTIDYL TRANSFERASE, RIBONUCLEASE H-LIKE SUPERFAMILY PROTEIN"/>
    <property type="match status" value="1"/>
</dbReference>
<dbReference type="PANTHER" id="PTHR33317:SF4">
    <property type="entry name" value="POLYNUCLEOTIDYL TRANSFERASE, RIBONUCLEASE H-LIKE SUPERFAMILY PROTEIN"/>
    <property type="match status" value="1"/>
</dbReference>
<dbReference type="Pfam" id="PF03652">
    <property type="entry name" value="RuvX"/>
    <property type="match status" value="1"/>
</dbReference>
<dbReference type="SMART" id="SM00732">
    <property type="entry name" value="YqgFc"/>
    <property type="match status" value="1"/>
</dbReference>
<dbReference type="SUPFAM" id="SSF53098">
    <property type="entry name" value="Ribonuclease H-like"/>
    <property type="match status" value="1"/>
</dbReference>
<organism>
    <name type="scientific">Histophilus somni (strain 2336)</name>
    <name type="common">Haemophilus somnus</name>
    <dbReference type="NCBI Taxonomy" id="228400"/>
    <lineage>
        <taxon>Bacteria</taxon>
        <taxon>Pseudomonadati</taxon>
        <taxon>Pseudomonadota</taxon>
        <taxon>Gammaproteobacteria</taxon>
        <taxon>Pasteurellales</taxon>
        <taxon>Pasteurellaceae</taxon>
        <taxon>Histophilus</taxon>
    </lineage>
</organism>
<name>YQGF_HISS2</name>
<evidence type="ECO:0000255" key="1">
    <source>
        <dbReference type="HAMAP-Rule" id="MF_00651"/>
    </source>
</evidence>
<keyword id="KW-0963">Cytoplasm</keyword>
<keyword id="KW-0378">Hydrolase</keyword>
<keyword id="KW-0540">Nuclease</keyword>
<keyword id="KW-0690">Ribosome biogenesis</keyword>
<gene>
    <name type="ordered locus">HSM_1901</name>
</gene>
<sequence length="141" mass="15575">MSITVLAFDFGTKSIGCAVGQSITGTAQALPAFKAQDGIPDWLKIEKCLKDWQPNIVVVGLPLNMDGSEQDLTHLARKFANRLNGRFGVKVELQDERLTTKQARDEIFQRGGYRALKKEKVDSISACLILESWFENGACGE</sequence>
<feature type="chain" id="PRO_1000082747" description="Putative pre-16S rRNA nuclease">
    <location>
        <begin position="1"/>
        <end position="141"/>
    </location>
</feature>
<accession>B0UWW2</accession>